<name>RL31_DESHY</name>
<dbReference type="EMBL" id="AP008230">
    <property type="protein sequence ID" value="BAE86724.1"/>
    <property type="molecule type" value="Genomic_DNA"/>
</dbReference>
<dbReference type="RefSeq" id="WP_011462249.1">
    <property type="nucleotide sequence ID" value="NC_007907.1"/>
</dbReference>
<dbReference type="SMR" id="Q24ML8"/>
<dbReference type="STRING" id="138119.DSY4935"/>
<dbReference type="KEGG" id="dsy:DSY4935"/>
<dbReference type="eggNOG" id="COG0254">
    <property type="taxonomic scope" value="Bacteria"/>
</dbReference>
<dbReference type="HOGENOM" id="CLU_114306_4_3_9"/>
<dbReference type="Proteomes" id="UP000001946">
    <property type="component" value="Chromosome"/>
</dbReference>
<dbReference type="GO" id="GO:1990904">
    <property type="term" value="C:ribonucleoprotein complex"/>
    <property type="evidence" value="ECO:0007669"/>
    <property type="project" value="UniProtKB-KW"/>
</dbReference>
<dbReference type="GO" id="GO:0005840">
    <property type="term" value="C:ribosome"/>
    <property type="evidence" value="ECO:0007669"/>
    <property type="project" value="UniProtKB-KW"/>
</dbReference>
<dbReference type="GO" id="GO:0046872">
    <property type="term" value="F:metal ion binding"/>
    <property type="evidence" value="ECO:0007669"/>
    <property type="project" value="UniProtKB-KW"/>
</dbReference>
<dbReference type="GO" id="GO:0019843">
    <property type="term" value="F:rRNA binding"/>
    <property type="evidence" value="ECO:0007669"/>
    <property type="project" value="UniProtKB-KW"/>
</dbReference>
<dbReference type="GO" id="GO:0003735">
    <property type="term" value="F:structural constituent of ribosome"/>
    <property type="evidence" value="ECO:0007669"/>
    <property type="project" value="InterPro"/>
</dbReference>
<dbReference type="GO" id="GO:0006412">
    <property type="term" value="P:translation"/>
    <property type="evidence" value="ECO:0007669"/>
    <property type="project" value="UniProtKB-UniRule"/>
</dbReference>
<dbReference type="Gene3D" id="4.10.830.30">
    <property type="entry name" value="Ribosomal protein L31"/>
    <property type="match status" value="1"/>
</dbReference>
<dbReference type="HAMAP" id="MF_00501">
    <property type="entry name" value="Ribosomal_bL31_1"/>
    <property type="match status" value="1"/>
</dbReference>
<dbReference type="InterPro" id="IPR034704">
    <property type="entry name" value="Ribosomal_bL28/bL31-like_sf"/>
</dbReference>
<dbReference type="InterPro" id="IPR002150">
    <property type="entry name" value="Ribosomal_bL31"/>
</dbReference>
<dbReference type="InterPro" id="IPR027491">
    <property type="entry name" value="Ribosomal_bL31_A"/>
</dbReference>
<dbReference type="InterPro" id="IPR042105">
    <property type="entry name" value="Ribosomal_bL31_sf"/>
</dbReference>
<dbReference type="NCBIfam" id="TIGR00105">
    <property type="entry name" value="L31"/>
    <property type="match status" value="1"/>
</dbReference>
<dbReference type="NCBIfam" id="NF000612">
    <property type="entry name" value="PRK00019.1"/>
    <property type="match status" value="1"/>
</dbReference>
<dbReference type="NCBIfam" id="NF001809">
    <property type="entry name" value="PRK00528.1"/>
    <property type="match status" value="1"/>
</dbReference>
<dbReference type="PANTHER" id="PTHR33280">
    <property type="entry name" value="50S RIBOSOMAL PROTEIN L31, CHLOROPLASTIC"/>
    <property type="match status" value="1"/>
</dbReference>
<dbReference type="PANTHER" id="PTHR33280:SF1">
    <property type="entry name" value="LARGE RIBOSOMAL SUBUNIT PROTEIN BL31C"/>
    <property type="match status" value="1"/>
</dbReference>
<dbReference type="Pfam" id="PF01197">
    <property type="entry name" value="Ribosomal_L31"/>
    <property type="match status" value="1"/>
</dbReference>
<dbReference type="PRINTS" id="PR01249">
    <property type="entry name" value="RIBOSOMALL31"/>
</dbReference>
<dbReference type="SUPFAM" id="SSF143800">
    <property type="entry name" value="L28p-like"/>
    <property type="match status" value="1"/>
</dbReference>
<dbReference type="PROSITE" id="PS01143">
    <property type="entry name" value="RIBOSOMAL_L31"/>
    <property type="match status" value="1"/>
</dbReference>
<gene>
    <name evidence="1" type="primary">rpmE</name>
    <name type="ordered locus">DSY4935</name>
</gene>
<evidence type="ECO:0000255" key="1">
    <source>
        <dbReference type="HAMAP-Rule" id="MF_00501"/>
    </source>
</evidence>
<evidence type="ECO:0000305" key="2"/>
<proteinExistence type="inferred from homology"/>
<accession>Q24ML8</accession>
<feature type="chain" id="PRO_0000259183" description="Large ribosomal subunit protein bL31">
    <location>
        <begin position="1"/>
        <end position="65"/>
    </location>
</feature>
<feature type="binding site" evidence="1">
    <location>
        <position position="16"/>
    </location>
    <ligand>
        <name>Zn(2+)</name>
        <dbReference type="ChEBI" id="CHEBI:29105"/>
    </ligand>
</feature>
<feature type="binding site" evidence="1">
    <location>
        <position position="18"/>
    </location>
    <ligand>
        <name>Zn(2+)</name>
        <dbReference type="ChEBI" id="CHEBI:29105"/>
    </ligand>
</feature>
<feature type="binding site" evidence="1">
    <location>
        <position position="36"/>
    </location>
    <ligand>
        <name>Zn(2+)</name>
        <dbReference type="ChEBI" id="CHEBI:29105"/>
    </ligand>
</feature>
<feature type="binding site" evidence="1">
    <location>
        <position position="39"/>
    </location>
    <ligand>
        <name>Zn(2+)</name>
        <dbReference type="ChEBI" id="CHEBI:29105"/>
    </ligand>
</feature>
<reference key="1">
    <citation type="journal article" date="2006" name="J. Bacteriol.">
        <title>Complete genome sequence of the dehalorespiring bacterium Desulfitobacterium hafniense Y51 and comparison with Dehalococcoides ethenogenes 195.</title>
        <authorList>
            <person name="Nonaka H."/>
            <person name="Keresztes G."/>
            <person name="Shinoda Y."/>
            <person name="Ikenaga Y."/>
            <person name="Abe M."/>
            <person name="Naito K."/>
            <person name="Inatomi K."/>
            <person name="Furukawa K."/>
            <person name="Inui M."/>
            <person name="Yukawa H."/>
        </authorList>
    </citation>
    <scope>NUCLEOTIDE SEQUENCE [LARGE SCALE GENOMIC DNA]</scope>
    <source>
        <strain>Y51</strain>
    </source>
</reference>
<organism>
    <name type="scientific">Desulfitobacterium hafniense (strain Y51)</name>
    <dbReference type="NCBI Taxonomy" id="138119"/>
    <lineage>
        <taxon>Bacteria</taxon>
        <taxon>Bacillati</taxon>
        <taxon>Bacillota</taxon>
        <taxon>Clostridia</taxon>
        <taxon>Eubacteriales</taxon>
        <taxon>Desulfitobacteriaceae</taxon>
        <taxon>Desulfitobacterium</taxon>
    </lineage>
</organism>
<comment type="function">
    <text evidence="1">Binds the 23S rRNA.</text>
</comment>
<comment type="cofactor">
    <cofactor evidence="1">
        <name>Zn(2+)</name>
        <dbReference type="ChEBI" id="CHEBI:29105"/>
    </cofactor>
    <text evidence="1">Binds 1 zinc ion per subunit.</text>
</comment>
<comment type="subunit">
    <text evidence="1">Part of the 50S ribosomal subunit.</text>
</comment>
<comment type="similarity">
    <text evidence="1">Belongs to the bacterial ribosomal protein bL31 family. Type A subfamily.</text>
</comment>
<protein>
    <recommendedName>
        <fullName evidence="1">Large ribosomal subunit protein bL31</fullName>
    </recommendedName>
    <alternativeName>
        <fullName evidence="2">50S ribosomal protein L31</fullName>
    </alternativeName>
</protein>
<sequence>MKEKTHPKYEQTTITCVCGEVIPTGSTKKDIKVEICSKCHPFYTGVQRFVDAGGRVDRFKKKYGM</sequence>
<keyword id="KW-0479">Metal-binding</keyword>
<keyword id="KW-1185">Reference proteome</keyword>
<keyword id="KW-0687">Ribonucleoprotein</keyword>
<keyword id="KW-0689">Ribosomal protein</keyword>
<keyword id="KW-0694">RNA-binding</keyword>
<keyword id="KW-0699">rRNA-binding</keyword>
<keyword id="KW-0862">Zinc</keyword>